<organism>
    <name type="scientific">Escherichia coli O17:K52:H18 (strain UMN026 / ExPEC)</name>
    <dbReference type="NCBI Taxonomy" id="585056"/>
    <lineage>
        <taxon>Bacteria</taxon>
        <taxon>Pseudomonadati</taxon>
        <taxon>Pseudomonadota</taxon>
        <taxon>Gammaproteobacteria</taxon>
        <taxon>Enterobacterales</taxon>
        <taxon>Enterobacteriaceae</taxon>
        <taxon>Escherichia</taxon>
    </lineage>
</organism>
<protein>
    <recommendedName>
        <fullName evidence="1">Dual-specificity RNA methyltransferase RlmN</fullName>
        <ecNumber evidence="1">2.1.1.192</ecNumber>
    </recommendedName>
    <alternativeName>
        <fullName evidence="1">23S rRNA (adenine(2503)-C(2))-methyltransferase</fullName>
    </alternativeName>
    <alternativeName>
        <fullName evidence="1">23S rRNA m2A2503 methyltransferase</fullName>
    </alternativeName>
    <alternativeName>
        <fullName evidence="1">Ribosomal RNA large subunit methyltransferase N</fullName>
    </alternativeName>
    <alternativeName>
        <fullName evidence="1">tRNA (adenine(37)-C(2))-methyltransferase</fullName>
    </alternativeName>
    <alternativeName>
        <fullName evidence="1">tRNA m2A37 methyltransferase</fullName>
    </alternativeName>
</protein>
<reference key="1">
    <citation type="journal article" date="2009" name="PLoS Genet.">
        <title>Organised genome dynamics in the Escherichia coli species results in highly diverse adaptive paths.</title>
        <authorList>
            <person name="Touchon M."/>
            <person name="Hoede C."/>
            <person name="Tenaillon O."/>
            <person name="Barbe V."/>
            <person name="Baeriswyl S."/>
            <person name="Bidet P."/>
            <person name="Bingen E."/>
            <person name="Bonacorsi S."/>
            <person name="Bouchier C."/>
            <person name="Bouvet O."/>
            <person name="Calteau A."/>
            <person name="Chiapello H."/>
            <person name="Clermont O."/>
            <person name="Cruveiller S."/>
            <person name="Danchin A."/>
            <person name="Diard M."/>
            <person name="Dossat C."/>
            <person name="Karoui M.E."/>
            <person name="Frapy E."/>
            <person name="Garry L."/>
            <person name="Ghigo J.M."/>
            <person name="Gilles A.M."/>
            <person name="Johnson J."/>
            <person name="Le Bouguenec C."/>
            <person name="Lescat M."/>
            <person name="Mangenot S."/>
            <person name="Martinez-Jehanne V."/>
            <person name="Matic I."/>
            <person name="Nassif X."/>
            <person name="Oztas S."/>
            <person name="Petit M.A."/>
            <person name="Pichon C."/>
            <person name="Rouy Z."/>
            <person name="Ruf C.S."/>
            <person name="Schneider D."/>
            <person name="Tourret J."/>
            <person name="Vacherie B."/>
            <person name="Vallenet D."/>
            <person name="Medigue C."/>
            <person name="Rocha E.P.C."/>
            <person name="Denamur E."/>
        </authorList>
    </citation>
    <scope>NUCLEOTIDE SEQUENCE [LARGE SCALE GENOMIC DNA]</scope>
    <source>
        <strain>UMN026 / ExPEC</strain>
    </source>
</reference>
<sequence length="384" mass="43032">MSEQLVTPENVTTKDGKINLLDLNRQQMREFFKDLGEKPFRADQVMKWMYHYCCDNFDEMTDINKVLRGKLKEVAEIRAPEVVEEQRSSDGTIKWAIAVGDQRVETVYIPEDDRATLCVSSQVGCALECKFCSTAQQGFNRNLRVSEIIGQVWRAAKIVGAAKVTGQRPITNVVMMGMGEPLLNLNNVVPAMEIMLDDFGFGLSKRRVTLSTSGVVPALDKLGDMIDVALAISLHAPNDEIRDEIVPINKKYNIETFLAAVRCYLEKSNANQGRVTIEYVMLDHVNDGTEHAHQLAELLKDTPCKINLIPWNPFPGAPYGRSSNSRIDRFSKVLMSYGFTTIVRKTRGDDIDAACGQLAGDVIDRTKRTLRKRMQGEAIDIKAV</sequence>
<proteinExistence type="inferred from homology"/>
<keyword id="KW-0004">4Fe-4S</keyword>
<keyword id="KW-0963">Cytoplasm</keyword>
<keyword id="KW-1015">Disulfide bond</keyword>
<keyword id="KW-0408">Iron</keyword>
<keyword id="KW-0411">Iron-sulfur</keyword>
<keyword id="KW-0479">Metal-binding</keyword>
<keyword id="KW-0489">Methyltransferase</keyword>
<keyword id="KW-0698">rRNA processing</keyword>
<keyword id="KW-0949">S-adenosyl-L-methionine</keyword>
<keyword id="KW-0808">Transferase</keyword>
<keyword id="KW-0819">tRNA processing</keyword>
<gene>
    <name evidence="1" type="primary">rlmN</name>
    <name type="ordered locus">ECUMN_2837</name>
</gene>
<evidence type="ECO:0000255" key="1">
    <source>
        <dbReference type="HAMAP-Rule" id="MF_01849"/>
    </source>
</evidence>
<evidence type="ECO:0000255" key="2">
    <source>
        <dbReference type="PROSITE-ProRule" id="PRU01266"/>
    </source>
</evidence>
<comment type="function">
    <text evidence="1">Specifically methylates position 2 of adenine 2503 in 23S rRNA and position 2 of adenine 37 in tRNAs. m2A2503 modification seems to play a crucial role in the proofreading step occurring at the peptidyl transferase center and thus would serve to optimize ribosomal fidelity.</text>
</comment>
<comment type="catalytic activity">
    <reaction evidence="1">
        <text>adenosine(2503) in 23S rRNA + 2 reduced [2Fe-2S]-[ferredoxin] + 2 S-adenosyl-L-methionine = 2-methyladenosine(2503) in 23S rRNA + 5'-deoxyadenosine + L-methionine + 2 oxidized [2Fe-2S]-[ferredoxin] + S-adenosyl-L-homocysteine</text>
        <dbReference type="Rhea" id="RHEA:42916"/>
        <dbReference type="Rhea" id="RHEA-COMP:10000"/>
        <dbReference type="Rhea" id="RHEA-COMP:10001"/>
        <dbReference type="Rhea" id="RHEA-COMP:10152"/>
        <dbReference type="Rhea" id="RHEA-COMP:10282"/>
        <dbReference type="ChEBI" id="CHEBI:17319"/>
        <dbReference type="ChEBI" id="CHEBI:33737"/>
        <dbReference type="ChEBI" id="CHEBI:33738"/>
        <dbReference type="ChEBI" id="CHEBI:57844"/>
        <dbReference type="ChEBI" id="CHEBI:57856"/>
        <dbReference type="ChEBI" id="CHEBI:59789"/>
        <dbReference type="ChEBI" id="CHEBI:74411"/>
        <dbReference type="ChEBI" id="CHEBI:74497"/>
        <dbReference type="EC" id="2.1.1.192"/>
    </reaction>
</comment>
<comment type="catalytic activity">
    <reaction evidence="1">
        <text>adenosine(37) in tRNA + 2 reduced [2Fe-2S]-[ferredoxin] + 2 S-adenosyl-L-methionine = 2-methyladenosine(37) in tRNA + 5'-deoxyadenosine + L-methionine + 2 oxidized [2Fe-2S]-[ferredoxin] + S-adenosyl-L-homocysteine</text>
        <dbReference type="Rhea" id="RHEA:43332"/>
        <dbReference type="Rhea" id="RHEA-COMP:10000"/>
        <dbReference type="Rhea" id="RHEA-COMP:10001"/>
        <dbReference type="Rhea" id="RHEA-COMP:10162"/>
        <dbReference type="Rhea" id="RHEA-COMP:10485"/>
        <dbReference type="ChEBI" id="CHEBI:17319"/>
        <dbReference type="ChEBI" id="CHEBI:33737"/>
        <dbReference type="ChEBI" id="CHEBI:33738"/>
        <dbReference type="ChEBI" id="CHEBI:57844"/>
        <dbReference type="ChEBI" id="CHEBI:57856"/>
        <dbReference type="ChEBI" id="CHEBI:59789"/>
        <dbReference type="ChEBI" id="CHEBI:74411"/>
        <dbReference type="ChEBI" id="CHEBI:74497"/>
        <dbReference type="EC" id="2.1.1.192"/>
    </reaction>
</comment>
<comment type="cofactor">
    <cofactor evidence="1">
        <name>[4Fe-4S] cluster</name>
        <dbReference type="ChEBI" id="CHEBI:49883"/>
    </cofactor>
    <text evidence="1">Binds 1 [4Fe-4S] cluster. The cluster is coordinated with 3 cysteines and an exchangeable S-adenosyl-L-methionine.</text>
</comment>
<comment type="subcellular location">
    <subcellularLocation>
        <location evidence="1">Cytoplasm</location>
    </subcellularLocation>
</comment>
<comment type="miscellaneous">
    <text evidence="1">Reaction proceeds by a ping-pong mechanism involving intermediate methylation of a conserved cysteine residue.</text>
</comment>
<comment type="similarity">
    <text evidence="1">Belongs to the radical SAM superfamily. RlmN family.</text>
</comment>
<dbReference type="EC" id="2.1.1.192" evidence="1"/>
<dbReference type="EMBL" id="CU928163">
    <property type="protein sequence ID" value="CAR14014.1"/>
    <property type="molecule type" value="Genomic_DNA"/>
</dbReference>
<dbReference type="RefSeq" id="WP_000003312.1">
    <property type="nucleotide sequence ID" value="NC_011751.1"/>
</dbReference>
<dbReference type="RefSeq" id="YP_002413539.1">
    <property type="nucleotide sequence ID" value="NC_011751.1"/>
</dbReference>
<dbReference type="SMR" id="B7N6A5"/>
<dbReference type="STRING" id="585056.ECUMN_2837"/>
<dbReference type="KEGG" id="eum:ECUMN_2837"/>
<dbReference type="PATRIC" id="fig|585056.7.peg.3022"/>
<dbReference type="HOGENOM" id="CLU_029101_0_0_6"/>
<dbReference type="Proteomes" id="UP000007097">
    <property type="component" value="Chromosome"/>
</dbReference>
<dbReference type="GO" id="GO:0005737">
    <property type="term" value="C:cytoplasm"/>
    <property type="evidence" value="ECO:0007669"/>
    <property type="project" value="UniProtKB-SubCell"/>
</dbReference>
<dbReference type="GO" id="GO:0051539">
    <property type="term" value="F:4 iron, 4 sulfur cluster binding"/>
    <property type="evidence" value="ECO:0007669"/>
    <property type="project" value="UniProtKB-UniRule"/>
</dbReference>
<dbReference type="GO" id="GO:0046872">
    <property type="term" value="F:metal ion binding"/>
    <property type="evidence" value="ECO:0007669"/>
    <property type="project" value="UniProtKB-KW"/>
</dbReference>
<dbReference type="GO" id="GO:0070040">
    <property type="term" value="F:rRNA (adenine(2503)-C2-)-methyltransferase activity"/>
    <property type="evidence" value="ECO:0007669"/>
    <property type="project" value="UniProtKB-UniRule"/>
</dbReference>
<dbReference type="GO" id="GO:0019843">
    <property type="term" value="F:rRNA binding"/>
    <property type="evidence" value="ECO:0007669"/>
    <property type="project" value="UniProtKB-UniRule"/>
</dbReference>
<dbReference type="GO" id="GO:0002935">
    <property type="term" value="F:tRNA (adenine(37)-C2)-methyltransferase activity"/>
    <property type="evidence" value="ECO:0007669"/>
    <property type="project" value="UniProtKB-UniRule"/>
</dbReference>
<dbReference type="GO" id="GO:0000049">
    <property type="term" value="F:tRNA binding"/>
    <property type="evidence" value="ECO:0007669"/>
    <property type="project" value="UniProtKB-UniRule"/>
</dbReference>
<dbReference type="GO" id="GO:0070475">
    <property type="term" value="P:rRNA base methylation"/>
    <property type="evidence" value="ECO:0007669"/>
    <property type="project" value="UniProtKB-UniRule"/>
</dbReference>
<dbReference type="GO" id="GO:0030488">
    <property type="term" value="P:tRNA methylation"/>
    <property type="evidence" value="ECO:0007669"/>
    <property type="project" value="UniProtKB-UniRule"/>
</dbReference>
<dbReference type="CDD" id="cd01335">
    <property type="entry name" value="Radical_SAM"/>
    <property type="match status" value="1"/>
</dbReference>
<dbReference type="FunFam" id="1.10.150.530:FF:000001">
    <property type="entry name" value="Dual-specificity RNA methyltransferase RlmN"/>
    <property type="match status" value="1"/>
</dbReference>
<dbReference type="FunFam" id="3.20.20.70:FF:000008">
    <property type="entry name" value="Dual-specificity RNA methyltransferase RlmN"/>
    <property type="match status" value="1"/>
</dbReference>
<dbReference type="Gene3D" id="1.10.150.530">
    <property type="match status" value="1"/>
</dbReference>
<dbReference type="Gene3D" id="3.20.20.70">
    <property type="entry name" value="Aldolase class I"/>
    <property type="match status" value="1"/>
</dbReference>
<dbReference type="HAMAP" id="MF_01849">
    <property type="entry name" value="RNA_methyltr_RlmN"/>
    <property type="match status" value="1"/>
</dbReference>
<dbReference type="InterPro" id="IPR013785">
    <property type="entry name" value="Aldolase_TIM"/>
</dbReference>
<dbReference type="InterPro" id="IPR040072">
    <property type="entry name" value="Methyltransferase_A"/>
</dbReference>
<dbReference type="InterPro" id="IPR048641">
    <property type="entry name" value="RlmN_N"/>
</dbReference>
<dbReference type="InterPro" id="IPR027492">
    <property type="entry name" value="RNA_MTrfase_RlmN"/>
</dbReference>
<dbReference type="InterPro" id="IPR004383">
    <property type="entry name" value="rRNA_lsu_MTrfase_RlmN/Cfr"/>
</dbReference>
<dbReference type="InterPro" id="IPR007197">
    <property type="entry name" value="rSAM"/>
</dbReference>
<dbReference type="NCBIfam" id="NF008396">
    <property type="entry name" value="PRK11194.1"/>
    <property type="match status" value="1"/>
</dbReference>
<dbReference type="NCBIfam" id="TIGR00048">
    <property type="entry name" value="rRNA_mod_RlmN"/>
    <property type="match status" value="1"/>
</dbReference>
<dbReference type="PANTHER" id="PTHR30544">
    <property type="entry name" value="23S RRNA METHYLTRANSFERASE"/>
    <property type="match status" value="1"/>
</dbReference>
<dbReference type="PANTHER" id="PTHR30544:SF5">
    <property type="entry name" value="RADICAL SAM CORE DOMAIN-CONTAINING PROTEIN"/>
    <property type="match status" value="1"/>
</dbReference>
<dbReference type="Pfam" id="PF04055">
    <property type="entry name" value="Radical_SAM"/>
    <property type="match status" value="1"/>
</dbReference>
<dbReference type="Pfam" id="PF21016">
    <property type="entry name" value="RlmN_N"/>
    <property type="match status" value="1"/>
</dbReference>
<dbReference type="PIRSF" id="PIRSF006004">
    <property type="entry name" value="CHP00048"/>
    <property type="match status" value="1"/>
</dbReference>
<dbReference type="SFLD" id="SFLDF00275">
    <property type="entry name" value="adenosine_C2_methyltransferase"/>
    <property type="match status" value="1"/>
</dbReference>
<dbReference type="SFLD" id="SFLDS00029">
    <property type="entry name" value="Radical_SAM"/>
    <property type="match status" value="1"/>
</dbReference>
<dbReference type="SUPFAM" id="SSF102114">
    <property type="entry name" value="Radical SAM enzymes"/>
    <property type="match status" value="1"/>
</dbReference>
<dbReference type="PROSITE" id="PS51918">
    <property type="entry name" value="RADICAL_SAM"/>
    <property type="match status" value="1"/>
</dbReference>
<name>RLMN_ECOLU</name>
<feature type="chain" id="PRO_1000188575" description="Dual-specificity RNA methyltransferase RlmN">
    <location>
        <begin position="1"/>
        <end position="384"/>
    </location>
</feature>
<feature type="domain" description="Radical SAM core" evidence="2">
    <location>
        <begin position="111"/>
        <end position="350"/>
    </location>
</feature>
<feature type="active site" description="Proton acceptor" evidence="1">
    <location>
        <position position="105"/>
    </location>
</feature>
<feature type="active site" description="S-methylcysteine intermediate" evidence="1">
    <location>
        <position position="355"/>
    </location>
</feature>
<feature type="binding site" evidence="1">
    <location>
        <position position="125"/>
    </location>
    <ligand>
        <name>[4Fe-4S] cluster</name>
        <dbReference type="ChEBI" id="CHEBI:49883"/>
        <note>4Fe-4S-S-AdoMet</note>
    </ligand>
</feature>
<feature type="binding site" evidence="1">
    <location>
        <position position="129"/>
    </location>
    <ligand>
        <name>[4Fe-4S] cluster</name>
        <dbReference type="ChEBI" id="CHEBI:49883"/>
        <note>4Fe-4S-S-AdoMet</note>
    </ligand>
</feature>
<feature type="binding site" evidence="1">
    <location>
        <position position="132"/>
    </location>
    <ligand>
        <name>[4Fe-4S] cluster</name>
        <dbReference type="ChEBI" id="CHEBI:49883"/>
        <note>4Fe-4S-S-AdoMet</note>
    </ligand>
</feature>
<feature type="binding site" evidence="1">
    <location>
        <begin position="179"/>
        <end position="180"/>
    </location>
    <ligand>
        <name>S-adenosyl-L-methionine</name>
        <dbReference type="ChEBI" id="CHEBI:59789"/>
    </ligand>
</feature>
<feature type="binding site" evidence="1">
    <location>
        <position position="211"/>
    </location>
    <ligand>
        <name>S-adenosyl-L-methionine</name>
        <dbReference type="ChEBI" id="CHEBI:59789"/>
    </ligand>
</feature>
<feature type="binding site" evidence="1">
    <location>
        <begin position="233"/>
        <end position="235"/>
    </location>
    <ligand>
        <name>S-adenosyl-L-methionine</name>
        <dbReference type="ChEBI" id="CHEBI:59789"/>
    </ligand>
</feature>
<feature type="binding site" evidence="1">
    <location>
        <position position="312"/>
    </location>
    <ligand>
        <name>S-adenosyl-L-methionine</name>
        <dbReference type="ChEBI" id="CHEBI:59789"/>
    </ligand>
</feature>
<feature type="disulfide bond" description="(transient)" evidence="1">
    <location>
        <begin position="118"/>
        <end position="355"/>
    </location>
</feature>
<accession>B7N6A5</accession>